<dbReference type="EC" id="1.1.1.79" evidence="1"/>
<dbReference type="EC" id="1.1.1.81" evidence="1"/>
<dbReference type="EMBL" id="AP009240">
    <property type="protein sequence ID" value="BAG79350.1"/>
    <property type="molecule type" value="Genomic_DNA"/>
</dbReference>
<dbReference type="RefSeq" id="WP_000805027.1">
    <property type="nucleotide sequence ID" value="NC_011415.1"/>
</dbReference>
<dbReference type="SMR" id="B6I3C3"/>
<dbReference type="GeneID" id="75203026"/>
<dbReference type="KEGG" id="ecy:ECSE_3826"/>
<dbReference type="HOGENOM" id="CLU_019796_1_2_6"/>
<dbReference type="Proteomes" id="UP000008199">
    <property type="component" value="Chromosome"/>
</dbReference>
<dbReference type="GO" id="GO:0005829">
    <property type="term" value="C:cytosol"/>
    <property type="evidence" value="ECO:0007669"/>
    <property type="project" value="TreeGrafter"/>
</dbReference>
<dbReference type="GO" id="GO:0005886">
    <property type="term" value="C:plasma membrane"/>
    <property type="evidence" value="ECO:0007669"/>
    <property type="project" value="UniProtKB-UniRule"/>
</dbReference>
<dbReference type="GO" id="GO:0030267">
    <property type="term" value="F:glyoxylate reductase (NADPH) activity"/>
    <property type="evidence" value="ECO:0007669"/>
    <property type="project" value="UniProtKB-UniRule"/>
</dbReference>
<dbReference type="GO" id="GO:0008465">
    <property type="term" value="F:hydroxypyruvate reductase (NADH) activity"/>
    <property type="evidence" value="ECO:0007669"/>
    <property type="project" value="RHEA"/>
</dbReference>
<dbReference type="GO" id="GO:0120509">
    <property type="term" value="F:hydroxypyruvate reductase (NADPH) activity"/>
    <property type="evidence" value="ECO:0007669"/>
    <property type="project" value="RHEA"/>
</dbReference>
<dbReference type="GO" id="GO:0051287">
    <property type="term" value="F:NAD binding"/>
    <property type="evidence" value="ECO:0007669"/>
    <property type="project" value="InterPro"/>
</dbReference>
<dbReference type="CDD" id="cd05301">
    <property type="entry name" value="GDH"/>
    <property type="match status" value="1"/>
</dbReference>
<dbReference type="FunFam" id="3.40.50.720:FF:000026">
    <property type="entry name" value="Glyoxylate/hydroxypyruvate reductase B"/>
    <property type="match status" value="1"/>
</dbReference>
<dbReference type="Gene3D" id="3.40.50.720">
    <property type="entry name" value="NAD(P)-binding Rossmann-like Domain"/>
    <property type="match status" value="2"/>
</dbReference>
<dbReference type="HAMAP" id="MF_01667">
    <property type="entry name" value="2_Hacid_dh_C_GhrB"/>
    <property type="match status" value="1"/>
</dbReference>
<dbReference type="InterPro" id="IPR050223">
    <property type="entry name" value="D-isomer_2-hydroxyacid_DH"/>
</dbReference>
<dbReference type="InterPro" id="IPR006139">
    <property type="entry name" value="D-isomer_2_OHA_DH_cat_dom"/>
</dbReference>
<dbReference type="InterPro" id="IPR029753">
    <property type="entry name" value="D-isomer_DH_CS"/>
</dbReference>
<dbReference type="InterPro" id="IPR006140">
    <property type="entry name" value="D-isomer_DH_NAD-bd"/>
</dbReference>
<dbReference type="InterPro" id="IPR023756">
    <property type="entry name" value="Glyo/OHPyrv_Rdtase_B"/>
</dbReference>
<dbReference type="InterPro" id="IPR036291">
    <property type="entry name" value="NAD(P)-bd_dom_sf"/>
</dbReference>
<dbReference type="NCBIfam" id="NF011938">
    <property type="entry name" value="PRK15409.1"/>
    <property type="match status" value="1"/>
</dbReference>
<dbReference type="PANTHER" id="PTHR10996">
    <property type="entry name" value="2-HYDROXYACID DEHYDROGENASE-RELATED"/>
    <property type="match status" value="1"/>
</dbReference>
<dbReference type="PANTHER" id="PTHR10996:SF283">
    <property type="entry name" value="GLYOXYLATE_HYDROXYPYRUVATE REDUCTASE B"/>
    <property type="match status" value="1"/>
</dbReference>
<dbReference type="Pfam" id="PF00389">
    <property type="entry name" value="2-Hacid_dh"/>
    <property type="match status" value="1"/>
</dbReference>
<dbReference type="Pfam" id="PF02826">
    <property type="entry name" value="2-Hacid_dh_C"/>
    <property type="match status" value="1"/>
</dbReference>
<dbReference type="SUPFAM" id="SSF52283">
    <property type="entry name" value="Formate/glycerate dehydrogenase catalytic domain-like"/>
    <property type="match status" value="1"/>
</dbReference>
<dbReference type="SUPFAM" id="SSF51735">
    <property type="entry name" value="NAD(P)-binding Rossmann-fold domains"/>
    <property type="match status" value="1"/>
</dbReference>
<dbReference type="PROSITE" id="PS00670">
    <property type="entry name" value="D_2_HYDROXYACID_DH_2"/>
    <property type="match status" value="1"/>
</dbReference>
<dbReference type="PROSITE" id="PS00671">
    <property type="entry name" value="D_2_HYDROXYACID_DH_3"/>
    <property type="match status" value="1"/>
</dbReference>
<keyword id="KW-0963">Cytoplasm</keyword>
<keyword id="KW-0520">NAD</keyword>
<keyword id="KW-0521">NADP</keyword>
<keyword id="KW-0560">Oxidoreductase</keyword>
<name>GHRB_ECOSE</name>
<proteinExistence type="inferred from homology"/>
<feature type="chain" id="PRO_1000187290" description="Glyoxylate/hydroxypyruvate reductase B">
    <location>
        <begin position="1"/>
        <end position="324"/>
    </location>
</feature>
<feature type="active site" evidence="1">
    <location>
        <position position="237"/>
    </location>
</feature>
<feature type="active site" evidence="1">
    <location>
        <position position="266"/>
    </location>
</feature>
<feature type="active site" description="Proton donor" evidence="1">
    <location>
        <position position="285"/>
    </location>
</feature>
<evidence type="ECO:0000255" key="1">
    <source>
        <dbReference type="HAMAP-Rule" id="MF_01667"/>
    </source>
</evidence>
<accession>B6I3C3</accession>
<sequence>MKPSVILYKALPDDLLQRLQEHFTVHQVANLSPQTVEQNAAIFAEAEGLLGSNENVDAALLEKMPKLRATSTISVGYDNFDVDALTARKILLMHTPTVLTETVADTLMALVLSTARRVVEVAERVKAGEWTASIGPDWYGTDVHHKTLGIVGMGRIGMALAQRAHFGFNMPILYNARRHHKEAEERFNARYCDLDTLLQESDFVCLILPLTDETHHLFGAEQFAKMKSSAIFINAGRGPVVDENALIAALQKGEIHAAGLDVFEQEPLSVDSPLLSMANVVAVPHIGSATHETRYGMAACAVDNLIDALQGKVEKNCVNPHVAD</sequence>
<reference key="1">
    <citation type="journal article" date="2008" name="DNA Res.">
        <title>Complete genome sequence and comparative analysis of the wild-type commensal Escherichia coli strain SE11 isolated from a healthy adult.</title>
        <authorList>
            <person name="Oshima K."/>
            <person name="Toh H."/>
            <person name="Ogura Y."/>
            <person name="Sasamoto H."/>
            <person name="Morita H."/>
            <person name="Park S.-H."/>
            <person name="Ooka T."/>
            <person name="Iyoda S."/>
            <person name="Taylor T.D."/>
            <person name="Hayashi T."/>
            <person name="Itoh K."/>
            <person name="Hattori M."/>
        </authorList>
    </citation>
    <scope>NUCLEOTIDE SEQUENCE [LARGE SCALE GENOMIC DNA]</scope>
    <source>
        <strain>SE11</strain>
    </source>
</reference>
<gene>
    <name evidence="1" type="primary">ghrB</name>
    <name type="ordered locus">ECSE_3826</name>
</gene>
<organism>
    <name type="scientific">Escherichia coli (strain SE11)</name>
    <dbReference type="NCBI Taxonomy" id="409438"/>
    <lineage>
        <taxon>Bacteria</taxon>
        <taxon>Pseudomonadati</taxon>
        <taxon>Pseudomonadota</taxon>
        <taxon>Gammaproteobacteria</taxon>
        <taxon>Enterobacterales</taxon>
        <taxon>Enterobacteriaceae</taxon>
        <taxon>Escherichia</taxon>
    </lineage>
</organism>
<comment type="function">
    <text evidence="1">Catalyzes the NADPH-dependent reduction of glyoxylate and hydroxypyruvate into glycolate and glycerate, respectively.</text>
</comment>
<comment type="catalytic activity">
    <reaction evidence="1">
        <text>glycolate + NADP(+) = glyoxylate + NADPH + H(+)</text>
        <dbReference type="Rhea" id="RHEA:10992"/>
        <dbReference type="ChEBI" id="CHEBI:15378"/>
        <dbReference type="ChEBI" id="CHEBI:29805"/>
        <dbReference type="ChEBI" id="CHEBI:36655"/>
        <dbReference type="ChEBI" id="CHEBI:57783"/>
        <dbReference type="ChEBI" id="CHEBI:58349"/>
        <dbReference type="EC" id="1.1.1.79"/>
    </reaction>
</comment>
<comment type="catalytic activity">
    <reaction evidence="1">
        <text>(R)-glycerate + NAD(+) = 3-hydroxypyruvate + NADH + H(+)</text>
        <dbReference type="Rhea" id="RHEA:17905"/>
        <dbReference type="ChEBI" id="CHEBI:15378"/>
        <dbReference type="ChEBI" id="CHEBI:16659"/>
        <dbReference type="ChEBI" id="CHEBI:17180"/>
        <dbReference type="ChEBI" id="CHEBI:57540"/>
        <dbReference type="ChEBI" id="CHEBI:57945"/>
        <dbReference type="EC" id="1.1.1.81"/>
    </reaction>
</comment>
<comment type="catalytic activity">
    <reaction evidence="1">
        <text>(R)-glycerate + NADP(+) = 3-hydroxypyruvate + NADPH + H(+)</text>
        <dbReference type="Rhea" id="RHEA:18657"/>
        <dbReference type="ChEBI" id="CHEBI:15378"/>
        <dbReference type="ChEBI" id="CHEBI:16659"/>
        <dbReference type="ChEBI" id="CHEBI:17180"/>
        <dbReference type="ChEBI" id="CHEBI:57783"/>
        <dbReference type="ChEBI" id="CHEBI:58349"/>
        <dbReference type="EC" id="1.1.1.81"/>
    </reaction>
</comment>
<comment type="subunit">
    <text evidence="1">Homodimer.</text>
</comment>
<comment type="subcellular location">
    <subcellularLocation>
        <location evidence="1">Cytoplasm</location>
    </subcellularLocation>
</comment>
<comment type="similarity">
    <text evidence="1">Belongs to the D-isomer specific 2-hydroxyacid dehydrogenase family. GhrB subfamily.</text>
</comment>
<protein>
    <recommendedName>
        <fullName evidence="1">Glyoxylate/hydroxypyruvate reductase B</fullName>
        <ecNumber evidence="1">1.1.1.79</ecNumber>
        <ecNumber evidence="1">1.1.1.81</ecNumber>
    </recommendedName>
</protein>